<name>PACE_ACIAD</name>
<proteinExistence type="evidence at transcript level"/>
<reference key="1">
    <citation type="journal article" date="2004" name="Nucleic Acids Res.">
        <title>Unique features revealed by the genome sequence of Acinetobacter sp. ADP1, a versatile and naturally transformation competent bacterium.</title>
        <authorList>
            <person name="Barbe V."/>
            <person name="Vallenet D."/>
            <person name="Fonknechten N."/>
            <person name="Kreimeyer A."/>
            <person name="Oztas S."/>
            <person name="Labarre L."/>
            <person name="Cruveiller S."/>
            <person name="Robert C."/>
            <person name="Duprat S."/>
            <person name="Wincker P."/>
            <person name="Ornston L.N."/>
            <person name="Weissenbach J."/>
            <person name="Marliere P."/>
            <person name="Cohen G.N."/>
            <person name="Medigue C."/>
        </authorList>
    </citation>
    <scope>NUCLEOTIDE SEQUENCE [LARGE SCALE GENOMIC DNA]</scope>
    <source>
        <strain>ATCC 33305 / BD413 / ADP1</strain>
    </source>
</reference>
<reference key="2">
    <citation type="journal article" date="2013" name="Proc. Natl. Acad. Sci. U.S.A.">
        <title>Transcriptomic and biochemical analyses identify a family of chlorhexidine efflux proteins.</title>
        <authorList>
            <person name="Hassan K.A."/>
            <person name="Jackson S.M."/>
            <person name="Penesyan A."/>
            <person name="Patching S.G."/>
            <person name="Tetu S.G."/>
            <person name="Eijkelkamp B.A."/>
            <person name="Brown M.H."/>
            <person name="Henderson P.J."/>
            <person name="Paulsen I.T."/>
        </authorList>
    </citation>
    <scope>FUNCTION</scope>
    <scope>INDUCTION</scope>
    <scope>DISRUPTION PHENOTYPE</scope>
    <source>
        <strain>ATCC 33305 / BD413 / ADP1</strain>
    </source>
</reference>
<protein>
    <recommendedName>
        <fullName evidence="1">Short-chain diamines transporter</fullName>
    </recommendedName>
    <alternativeName>
        <fullName evidence="4">Acinetobacter chlorhexidine efflux protein I</fullName>
    </alternativeName>
</protein>
<evidence type="ECO:0000250" key="1">
    <source>
        <dbReference type="UniProtKB" id="P0DUT9"/>
    </source>
</evidence>
<evidence type="ECO:0000255" key="2"/>
<evidence type="ECO:0000269" key="3">
    <source>
    </source>
</evidence>
<evidence type="ECO:0000303" key="4">
    <source>
    </source>
</evidence>
<evidence type="ECO:0000305" key="5"/>
<evidence type="ECO:0000312" key="6">
    <source>
        <dbReference type="EMBL" id="CAG68803.1"/>
    </source>
</evidence>
<accession>Q6FAW0</accession>
<organism>
    <name type="scientific">Acinetobacter baylyi (strain ATCC 33305 / BD413 / ADP1)</name>
    <dbReference type="NCBI Taxonomy" id="62977"/>
    <lineage>
        <taxon>Bacteria</taxon>
        <taxon>Pseudomonadati</taxon>
        <taxon>Pseudomonadota</taxon>
        <taxon>Gammaproteobacteria</taxon>
        <taxon>Moraxellales</taxon>
        <taxon>Moraxellaceae</taxon>
        <taxon>Acinetobacter</taxon>
    </lineage>
</organism>
<sequence>MLISKRRMIHALSYEVILLVIIAIALSFIFDVPLEVTGTLGIVMAVTSVFWNMIFNHFFEKFERKHQLERTVKIRILHAIGFEGGLMLVTIPMVAYAMNMSLWQAIVLDFGLTMCILVYTFIFQWCYDTIEKRLGYTPRHS</sequence>
<comment type="function">
    <text evidence="1 3">Mediates the efflux of short-chain diamines when energized by an electrochemical gradient (By similarity). Involved in resistance to the synthetic biocide chlorhexidine, a widely used antiseptic and disinfectant in both hospital and community settings (PubMed:24277845). Interacts directly with chlorhexidine and mediates its efflux via an energy-dependent mechanism (By similarity).</text>
</comment>
<comment type="subcellular location">
    <subcellularLocation>
        <location evidence="1">Cell inner membrane</location>
        <topology evidence="2">Multi-pass membrane protein</topology>
    </subcellularLocation>
</comment>
<comment type="induction">
    <text evidence="3">Induced by chlorhexidine.</text>
</comment>
<comment type="disruption phenotype">
    <text evidence="3">Deletion mutant shows increased chlorhexidine susceptibility.</text>
</comment>
<comment type="similarity">
    <text evidence="5">Belongs to the proteobacterial antimicrobial compound efflux (PACE) (TC 2.A.117) family.</text>
</comment>
<comment type="sequence caution" evidence="5">
    <conflict type="erroneous initiation">
        <sequence resource="EMBL-CDS" id="CAG68803"/>
    </conflict>
    <text>Truncated N-terminus.</text>
</comment>
<feature type="chain" id="PRO_0000453612" description="Short-chain diamines transporter">
    <location>
        <begin position="1"/>
        <end position="141"/>
    </location>
</feature>
<feature type="transmembrane region" description="Helical" evidence="2">
    <location>
        <begin position="16"/>
        <end position="36"/>
    </location>
</feature>
<feature type="transmembrane region" description="Helical" evidence="2">
    <location>
        <begin position="39"/>
        <end position="59"/>
    </location>
</feature>
<feature type="transmembrane region" description="Helical" evidence="2">
    <location>
        <begin position="76"/>
        <end position="96"/>
    </location>
</feature>
<feature type="transmembrane region" description="Helical" evidence="2">
    <location>
        <begin position="103"/>
        <end position="123"/>
    </location>
</feature>
<keyword id="KW-0050">Antiport</keyword>
<keyword id="KW-0997">Cell inner membrane</keyword>
<keyword id="KW-1003">Cell membrane</keyword>
<keyword id="KW-0472">Membrane</keyword>
<keyword id="KW-0346">Stress response</keyword>
<keyword id="KW-0812">Transmembrane</keyword>
<keyword id="KW-1133">Transmembrane helix</keyword>
<keyword id="KW-0813">Transport</keyword>
<dbReference type="EMBL" id="CR543861">
    <property type="protein sequence ID" value="CAG68803.1"/>
    <property type="status" value="ALT_INIT"/>
    <property type="molecule type" value="Genomic_DNA"/>
</dbReference>
<dbReference type="RefSeq" id="WP_004927292.1">
    <property type="nucleotide sequence ID" value="NC_005966.1"/>
</dbReference>
<dbReference type="SMR" id="Q6FAW0"/>
<dbReference type="STRING" id="202950.GCA_001485005_00391"/>
<dbReference type="GeneID" id="45234340"/>
<dbReference type="KEGG" id="aci:ACIAD1978"/>
<dbReference type="eggNOG" id="COG4125">
    <property type="taxonomic scope" value="Bacteria"/>
</dbReference>
<dbReference type="HOGENOM" id="CLU_120004_1_1_6"/>
<dbReference type="OrthoDB" id="1631120at2"/>
<dbReference type="Proteomes" id="UP000000430">
    <property type="component" value="Chromosome"/>
</dbReference>
<dbReference type="GO" id="GO:0005886">
    <property type="term" value="C:plasma membrane"/>
    <property type="evidence" value="ECO:0007669"/>
    <property type="project" value="UniProtKB-SubCell"/>
</dbReference>
<dbReference type="GO" id="GO:0015297">
    <property type="term" value="F:antiporter activity"/>
    <property type="evidence" value="ECO:0007669"/>
    <property type="project" value="UniProtKB-KW"/>
</dbReference>
<dbReference type="InterPro" id="IPR007896">
    <property type="entry name" value="BTP_bacteria"/>
</dbReference>
<dbReference type="NCBIfam" id="NF033663">
    <property type="entry name" value="AceI_fam_PACE"/>
    <property type="match status" value="1"/>
</dbReference>
<dbReference type="NCBIfam" id="NF033664">
    <property type="entry name" value="PACE_transport"/>
    <property type="match status" value="1"/>
</dbReference>
<dbReference type="Pfam" id="PF05232">
    <property type="entry name" value="BTP"/>
    <property type="match status" value="2"/>
</dbReference>
<gene>
    <name evidence="4" type="primary">aceI</name>
    <name evidence="6" type="ordered locus">ACIAD1978</name>
</gene>